<sequence>MKPVIALVGRPNVGKSTLFNRLTKTRDAIVADFAGLTRDRHYGNGKLGPHEYIVIDTGGFEPDAVTGIYKEMARQTRQAVAESDVVIFVVDARAGISAQDYDIANYLRKLGKPTVLAANKAEGLPEGTQVSEFFELGLGEMLAVSASHGQGMRMLVDLALAPLNLPDPAEETEQEDPAVIKLAVAGRPNVGKSTLINTWLGEERLVAFDLPGTTRDAISVPFEHAGQKFELIDTAGLRRKGKVFEAIEKFSVVKTLQAIENANVVLLLLDATQGVTDQDAHIAGYILESGRAVVLAVNKWDAVDAYQRELLQRSIETRLGFLKFASIHHISAIKRQGLGPVWKSIIQAHASANRKMSTPVLTRLLMEAVQFQQPQRSGVFRPKLRYAHQGGMNPPIVIIHGNSLDHVTESYKRYLEGRIRKEFDLVGTPLRIQLKSSVNPFKDKE</sequence>
<keyword id="KW-0342">GTP-binding</keyword>
<keyword id="KW-0547">Nucleotide-binding</keyword>
<keyword id="KW-1185">Reference proteome</keyword>
<keyword id="KW-0677">Repeat</keyword>
<keyword id="KW-0690">Ribosome biogenesis</keyword>
<organism>
    <name type="scientific">Polaromonas naphthalenivorans (strain CJ2)</name>
    <dbReference type="NCBI Taxonomy" id="365044"/>
    <lineage>
        <taxon>Bacteria</taxon>
        <taxon>Pseudomonadati</taxon>
        <taxon>Pseudomonadota</taxon>
        <taxon>Betaproteobacteria</taxon>
        <taxon>Burkholderiales</taxon>
        <taxon>Comamonadaceae</taxon>
        <taxon>Polaromonas</taxon>
    </lineage>
</organism>
<feature type="chain" id="PRO_1000011688" description="GTPase Der">
    <location>
        <begin position="1"/>
        <end position="445"/>
    </location>
</feature>
<feature type="domain" description="EngA-type G 1">
    <location>
        <begin position="3"/>
        <end position="167"/>
    </location>
</feature>
<feature type="domain" description="EngA-type G 2">
    <location>
        <begin position="180"/>
        <end position="353"/>
    </location>
</feature>
<feature type="domain" description="KH-like" evidence="1">
    <location>
        <begin position="354"/>
        <end position="438"/>
    </location>
</feature>
<feature type="binding site" evidence="1">
    <location>
        <begin position="9"/>
        <end position="16"/>
    </location>
    <ligand>
        <name>GTP</name>
        <dbReference type="ChEBI" id="CHEBI:37565"/>
        <label>1</label>
    </ligand>
</feature>
<feature type="binding site" evidence="1">
    <location>
        <begin position="56"/>
        <end position="60"/>
    </location>
    <ligand>
        <name>GTP</name>
        <dbReference type="ChEBI" id="CHEBI:37565"/>
        <label>1</label>
    </ligand>
</feature>
<feature type="binding site" evidence="1">
    <location>
        <begin position="119"/>
        <end position="122"/>
    </location>
    <ligand>
        <name>GTP</name>
        <dbReference type="ChEBI" id="CHEBI:37565"/>
        <label>1</label>
    </ligand>
</feature>
<feature type="binding site" evidence="1">
    <location>
        <begin position="186"/>
        <end position="193"/>
    </location>
    <ligand>
        <name>GTP</name>
        <dbReference type="ChEBI" id="CHEBI:37565"/>
        <label>2</label>
    </ligand>
</feature>
<feature type="binding site" evidence="1">
    <location>
        <begin position="233"/>
        <end position="237"/>
    </location>
    <ligand>
        <name>GTP</name>
        <dbReference type="ChEBI" id="CHEBI:37565"/>
        <label>2</label>
    </ligand>
</feature>
<feature type="binding site" evidence="1">
    <location>
        <begin position="298"/>
        <end position="301"/>
    </location>
    <ligand>
        <name>GTP</name>
        <dbReference type="ChEBI" id="CHEBI:37565"/>
        <label>2</label>
    </ligand>
</feature>
<dbReference type="EMBL" id="CP000529">
    <property type="protein sequence ID" value="ABM37186.1"/>
    <property type="molecule type" value="Genomic_DNA"/>
</dbReference>
<dbReference type="RefSeq" id="WP_011801267.1">
    <property type="nucleotide sequence ID" value="NC_008781.1"/>
</dbReference>
<dbReference type="SMR" id="A1VNF8"/>
<dbReference type="STRING" id="365044.Pnap_1876"/>
<dbReference type="KEGG" id="pna:Pnap_1876"/>
<dbReference type="eggNOG" id="COG1160">
    <property type="taxonomic scope" value="Bacteria"/>
</dbReference>
<dbReference type="HOGENOM" id="CLU_016077_6_2_4"/>
<dbReference type="OrthoDB" id="9805918at2"/>
<dbReference type="Proteomes" id="UP000000644">
    <property type="component" value="Chromosome"/>
</dbReference>
<dbReference type="GO" id="GO:0005525">
    <property type="term" value="F:GTP binding"/>
    <property type="evidence" value="ECO:0007669"/>
    <property type="project" value="UniProtKB-UniRule"/>
</dbReference>
<dbReference type="GO" id="GO:0043022">
    <property type="term" value="F:ribosome binding"/>
    <property type="evidence" value="ECO:0007669"/>
    <property type="project" value="TreeGrafter"/>
</dbReference>
<dbReference type="GO" id="GO:0042254">
    <property type="term" value="P:ribosome biogenesis"/>
    <property type="evidence" value="ECO:0007669"/>
    <property type="project" value="UniProtKB-KW"/>
</dbReference>
<dbReference type="CDD" id="cd01894">
    <property type="entry name" value="EngA1"/>
    <property type="match status" value="1"/>
</dbReference>
<dbReference type="CDD" id="cd01895">
    <property type="entry name" value="EngA2"/>
    <property type="match status" value="1"/>
</dbReference>
<dbReference type="FunFam" id="3.30.300.20:FF:000004">
    <property type="entry name" value="GTPase Der"/>
    <property type="match status" value="1"/>
</dbReference>
<dbReference type="FunFam" id="3.40.50.300:FF:000040">
    <property type="entry name" value="GTPase Der"/>
    <property type="match status" value="1"/>
</dbReference>
<dbReference type="FunFam" id="3.40.50.300:FF:000057">
    <property type="entry name" value="GTPase Der"/>
    <property type="match status" value="1"/>
</dbReference>
<dbReference type="Gene3D" id="3.30.300.20">
    <property type="match status" value="1"/>
</dbReference>
<dbReference type="Gene3D" id="3.40.50.300">
    <property type="entry name" value="P-loop containing nucleotide triphosphate hydrolases"/>
    <property type="match status" value="2"/>
</dbReference>
<dbReference type="HAMAP" id="MF_00195">
    <property type="entry name" value="GTPase_Der"/>
    <property type="match status" value="1"/>
</dbReference>
<dbReference type="InterPro" id="IPR031166">
    <property type="entry name" value="G_ENGA"/>
</dbReference>
<dbReference type="InterPro" id="IPR006073">
    <property type="entry name" value="GTP-bd"/>
</dbReference>
<dbReference type="InterPro" id="IPR016484">
    <property type="entry name" value="GTPase_Der"/>
</dbReference>
<dbReference type="InterPro" id="IPR032859">
    <property type="entry name" value="KH_dom-like"/>
</dbReference>
<dbReference type="InterPro" id="IPR015946">
    <property type="entry name" value="KH_dom-like_a/b"/>
</dbReference>
<dbReference type="InterPro" id="IPR027417">
    <property type="entry name" value="P-loop_NTPase"/>
</dbReference>
<dbReference type="InterPro" id="IPR005225">
    <property type="entry name" value="Small_GTP-bd"/>
</dbReference>
<dbReference type="NCBIfam" id="TIGR03594">
    <property type="entry name" value="GTPase_EngA"/>
    <property type="match status" value="1"/>
</dbReference>
<dbReference type="NCBIfam" id="TIGR00231">
    <property type="entry name" value="small_GTP"/>
    <property type="match status" value="2"/>
</dbReference>
<dbReference type="PANTHER" id="PTHR43834">
    <property type="entry name" value="GTPASE DER"/>
    <property type="match status" value="1"/>
</dbReference>
<dbReference type="PANTHER" id="PTHR43834:SF6">
    <property type="entry name" value="GTPASE DER"/>
    <property type="match status" value="1"/>
</dbReference>
<dbReference type="Pfam" id="PF14714">
    <property type="entry name" value="KH_dom-like"/>
    <property type="match status" value="1"/>
</dbReference>
<dbReference type="Pfam" id="PF01926">
    <property type="entry name" value="MMR_HSR1"/>
    <property type="match status" value="2"/>
</dbReference>
<dbReference type="PIRSF" id="PIRSF006485">
    <property type="entry name" value="GTP-binding_EngA"/>
    <property type="match status" value="1"/>
</dbReference>
<dbReference type="PRINTS" id="PR00326">
    <property type="entry name" value="GTP1OBG"/>
</dbReference>
<dbReference type="SUPFAM" id="SSF52540">
    <property type="entry name" value="P-loop containing nucleoside triphosphate hydrolases"/>
    <property type="match status" value="2"/>
</dbReference>
<dbReference type="PROSITE" id="PS51712">
    <property type="entry name" value="G_ENGA"/>
    <property type="match status" value="2"/>
</dbReference>
<proteinExistence type="inferred from homology"/>
<accession>A1VNF8</accession>
<name>DER_POLNA</name>
<gene>
    <name evidence="1" type="primary">der</name>
    <name type="synonym">engA</name>
    <name type="ordered locus">Pnap_1876</name>
</gene>
<comment type="function">
    <text evidence="1">GTPase that plays an essential role in the late steps of ribosome biogenesis.</text>
</comment>
<comment type="subunit">
    <text evidence="1">Associates with the 50S ribosomal subunit.</text>
</comment>
<comment type="similarity">
    <text evidence="1">Belongs to the TRAFAC class TrmE-Era-EngA-EngB-Septin-like GTPase superfamily. EngA (Der) GTPase family.</text>
</comment>
<protein>
    <recommendedName>
        <fullName evidence="1">GTPase Der</fullName>
    </recommendedName>
    <alternativeName>
        <fullName evidence="1">GTP-binding protein EngA</fullName>
    </alternativeName>
</protein>
<reference key="1">
    <citation type="journal article" date="2009" name="Environ. Microbiol.">
        <title>The genome of Polaromonas naphthalenivorans strain CJ2, isolated from coal tar-contaminated sediment, reveals physiological and metabolic versatility and evolution through extensive horizontal gene transfer.</title>
        <authorList>
            <person name="Yagi J.M."/>
            <person name="Sims D."/>
            <person name="Brettin T."/>
            <person name="Bruce D."/>
            <person name="Madsen E.L."/>
        </authorList>
    </citation>
    <scope>NUCLEOTIDE SEQUENCE [LARGE SCALE GENOMIC DNA]</scope>
    <source>
        <strain>CJ2</strain>
    </source>
</reference>
<evidence type="ECO:0000255" key="1">
    <source>
        <dbReference type="HAMAP-Rule" id="MF_00195"/>
    </source>
</evidence>